<gene>
    <name evidence="11" type="primary">Camta1</name>
    <name evidence="9" type="synonym">Kiaa0833</name>
</gene>
<accession>A2A891</accession>
<accession>A2A892</accession>
<accession>A2A896</accession>
<accession>A2A897</accession>
<accession>A2A898</accession>
<accession>B2KGR3</accession>
<accession>B2KGR4</accession>
<accession>Q80TQ8</accession>
<reference key="1">
    <citation type="journal article" date="2009" name="PLoS Biol.">
        <title>Lineage-specific biology revealed by a finished genome assembly of the mouse.</title>
        <authorList>
            <person name="Church D.M."/>
            <person name="Goodstadt L."/>
            <person name="Hillier L.W."/>
            <person name="Zody M.C."/>
            <person name="Goldstein S."/>
            <person name="She X."/>
            <person name="Bult C.J."/>
            <person name="Agarwala R."/>
            <person name="Cherry J.L."/>
            <person name="DiCuccio M."/>
            <person name="Hlavina W."/>
            <person name="Kapustin Y."/>
            <person name="Meric P."/>
            <person name="Maglott D."/>
            <person name="Birtle Z."/>
            <person name="Marques A.C."/>
            <person name="Graves T."/>
            <person name="Zhou S."/>
            <person name="Teague B."/>
            <person name="Potamousis K."/>
            <person name="Churas C."/>
            <person name="Place M."/>
            <person name="Herschleb J."/>
            <person name="Runnheim R."/>
            <person name="Forrest D."/>
            <person name="Amos-Landgraf J."/>
            <person name="Schwartz D.C."/>
            <person name="Cheng Z."/>
            <person name="Lindblad-Toh K."/>
            <person name="Eichler E.E."/>
            <person name="Ponting C.P."/>
        </authorList>
    </citation>
    <scope>NUCLEOTIDE SEQUENCE [LARGE SCALE GENOMIC DNA]</scope>
    <source>
        <strain>C57BL/6J</strain>
    </source>
</reference>
<reference evidence="8 9" key="2">
    <citation type="journal article" date="2003" name="DNA Res.">
        <title>Prediction of the coding sequences of mouse homologues of KIAA gene: II. The complete nucleotide sequences of 400 mouse KIAA-homologous cDNAs identified by screening of terminal sequences of cDNA clones randomly sampled from size-fractionated libraries.</title>
        <authorList>
            <person name="Okazaki N."/>
            <person name="Kikuno R."/>
            <person name="Ohara R."/>
            <person name="Inamoto S."/>
            <person name="Aizawa H."/>
            <person name="Yuasa S."/>
            <person name="Nakajima D."/>
            <person name="Nagase T."/>
            <person name="Ohara O."/>
            <person name="Koga H."/>
        </authorList>
    </citation>
    <scope>NUCLEOTIDE SEQUENCE [LARGE SCALE MRNA] OF 160-1682 (ISOFORM 1)</scope>
    <source>
        <tissue evidence="9">Brain</tissue>
    </source>
</reference>
<name>CMTA1_MOUSE</name>
<organism>
    <name type="scientific">Mus musculus</name>
    <name type="common">Mouse</name>
    <dbReference type="NCBI Taxonomy" id="10090"/>
    <lineage>
        <taxon>Eukaryota</taxon>
        <taxon>Metazoa</taxon>
        <taxon>Chordata</taxon>
        <taxon>Craniata</taxon>
        <taxon>Vertebrata</taxon>
        <taxon>Euteleostomi</taxon>
        <taxon>Mammalia</taxon>
        <taxon>Eutheria</taxon>
        <taxon>Euarchontoglires</taxon>
        <taxon>Glires</taxon>
        <taxon>Rodentia</taxon>
        <taxon>Myomorpha</taxon>
        <taxon>Muroidea</taxon>
        <taxon>Muridae</taxon>
        <taxon>Murinae</taxon>
        <taxon>Mus</taxon>
        <taxon>Mus</taxon>
    </lineage>
</organism>
<keyword id="KW-0010">Activator</keyword>
<keyword id="KW-0025">Alternative splicing</keyword>
<keyword id="KW-0040">ANK repeat</keyword>
<keyword id="KW-0963">Cytoplasm</keyword>
<keyword id="KW-0539">Nucleus</keyword>
<keyword id="KW-1185">Reference proteome</keyword>
<keyword id="KW-0677">Repeat</keyword>
<keyword id="KW-0804">Transcription</keyword>
<keyword id="KW-0805">Transcription regulation</keyword>
<feature type="chain" id="PRO_0000355043" description="Calmodulin-binding transcription activator 1">
    <location>
        <begin position="1"/>
        <end position="1682"/>
    </location>
</feature>
<feature type="domain" description="IPT/TIG" evidence="2">
    <location>
        <begin position="877"/>
        <end position="955"/>
    </location>
</feature>
<feature type="repeat" description="ANK 1" evidence="3">
    <location>
        <begin position="1066"/>
        <end position="1095"/>
    </location>
</feature>
<feature type="repeat" description="ANK 2" evidence="3">
    <location>
        <begin position="1111"/>
        <end position="1141"/>
    </location>
</feature>
<feature type="repeat" description="ANK 3" evidence="3">
    <location>
        <begin position="1145"/>
        <end position="1174"/>
    </location>
</feature>
<feature type="domain" description="IQ 1" evidence="4">
    <location>
        <begin position="1549"/>
        <end position="1585"/>
    </location>
</feature>
<feature type="domain" description="IQ 2" evidence="4">
    <location>
        <begin position="1586"/>
        <end position="1608"/>
    </location>
</feature>
<feature type="domain" description="IQ 3" evidence="4">
    <location>
        <begin position="1609"/>
        <end position="1631"/>
    </location>
</feature>
<feature type="DNA-binding region" description="CG-1" evidence="5">
    <location>
        <begin position="63"/>
        <end position="188"/>
    </location>
</feature>
<feature type="region of interest" description="Disordered" evidence="6">
    <location>
        <begin position="284"/>
        <end position="375"/>
    </location>
</feature>
<feature type="region of interest" description="Disordered" evidence="6">
    <location>
        <begin position="599"/>
        <end position="622"/>
    </location>
</feature>
<feature type="region of interest" description="Disordered" evidence="6">
    <location>
        <begin position="992"/>
        <end position="1020"/>
    </location>
</feature>
<feature type="region of interest" description="Disordered" evidence="6">
    <location>
        <begin position="1217"/>
        <end position="1249"/>
    </location>
</feature>
<feature type="region of interest" description="Disordered" evidence="6">
    <location>
        <begin position="1267"/>
        <end position="1318"/>
    </location>
</feature>
<feature type="short sequence motif" description="Nuclear localization signal" evidence="2 5">
    <location>
        <begin position="112"/>
        <end position="119"/>
    </location>
</feature>
<feature type="compositionally biased region" description="Basic and acidic residues" evidence="6">
    <location>
        <begin position="302"/>
        <end position="327"/>
    </location>
</feature>
<feature type="compositionally biased region" description="Polar residues" evidence="6">
    <location>
        <begin position="337"/>
        <end position="367"/>
    </location>
</feature>
<feature type="compositionally biased region" description="Polar residues" evidence="6">
    <location>
        <begin position="599"/>
        <end position="618"/>
    </location>
</feature>
<feature type="compositionally biased region" description="Gly residues" evidence="6">
    <location>
        <begin position="1005"/>
        <end position="1020"/>
    </location>
</feature>
<feature type="compositionally biased region" description="Polar residues" evidence="6">
    <location>
        <begin position="1268"/>
        <end position="1291"/>
    </location>
</feature>
<feature type="compositionally biased region" description="Low complexity" evidence="6">
    <location>
        <begin position="1308"/>
        <end position="1318"/>
    </location>
</feature>
<feature type="splice variant" id="VSP_052987" description="In isoform 3 and isoform 4." evidence="8">
    <location>
        <begin position="1"/>
        <end position="978"/>
    </location>
</feature>
<feature type="splice variant" id="VSP_052988" description="In isoform 3 and isoform 4." evidence="8">
    <location>
        <begin position="1222"/>
        <end position="1334"/>
    </location>
</feature>
<feature type="splice variant" id="VSP_052989" description="In isoform 5." evidence="8">
    <location>
        <begin position="1459"/>
        <end position="1472"/>
    </location>
</feature>
<feature type="splice variant" id="VSP_052990" description="In isoform 2, isoform 4 and isoform 5." evidence="8">
    <location>
        <begin position="1566"/>
        <end position="1572"/>
    </location>
</feature>
<feature type="splice variant" id="VSP_052991" description="In isoform 4 and isoform 5." evidence="8">
    <original>SPLVDHRLYKRSERIEKGQGT</original>
    <variation>RVKELKKAKELEDIQQHPLAM</variation>
    <location>
        <begin position="1662"/>
        <end position="1682"/>
    </location>
</feature>
<feature type="sequence conflict" description="In Ref. 1; CAQ51627/CAQ51628/CAQ51883/CAQ51884." evidence="8" ref="1">
    <original>D</original>
    <variation>G</variation>
    <location>
        <position position="1394"/>
    </location>
</feature>
<feature type="sequence conflict" description="In Ref. 1; CAQ51627/CAQ51628/CAQ51883/CAQ51884." evidence="8" ref="1">
    <original>S</original>
    <variation>N</variation>
    <location>
        <position position="1482"/>
    </location>
</feature>
<comment type="function">
    <text evidence="1">Transcriptional activator.</text>
</comment>
<comment type="subunit">
    <text evidence="2">May interact with calmodulin.</text>
</comment>
<comment type="subcellular location">
    <subcellularLocation>
        <location evidence="2 5">Nucleus</location>
    </subcellularLocation>
    <subcellularLocation>
        <location evidence="2">Cytoplasm</location>
    </subcellularLocation>
</comment>
<comment type="alternative products">
    <event type="alternative splicing"/>
    <isoform>
        <id>A2A891-1</id>
        <name evidence="7">1</name>
        <sequence type="displayed"/>
    </isoform>
    <isoform>
        <id>A2A891-2</id>
        <name>2</name>
        <sequence type="described" ref="VSP_052990"/>
    </isoform>
    <isoform>
        <id>A2A891-3</id>
        <name>3</name>
        <sequence type="described" ref="VSP_052987 VSP_052988"/>
    </isoform>
    <isoform>
        <id>A2A891-4</id>
        <name>4</name>
        <sequence type="described" ref="VSP_052987 VSP_052988 VSP_052990 VSP_052991"/>
    </isoform>
    <isoform>
        <id>A2A891-5</id>
        <name>5</name>
        <sequence type="described" ref="VSP_052989 VSP_052990 VSP_052991"/>
    </isoform>
</comment>
<comment type="similarity">
    <text evidence="3">Belongs to the CAMTA family.</text>
</comment>
<comment type="sequence caution" evidence="8">
    <conflict type="erroneous gene model prediction">
        <sequence resource="EMBL-CDS" id="CAM24788"/>
    </conflict>
</comment>
<dbReference type="EMBL" id="AL606986">
    <property type="protein sequence ID" value="CAM18834.1"/>
    <property type="molecule type" value="Genomic_DNA"/>
</dbReference>
<dbReference type="EMBL" id="AL606967">
    <property type="protein sequence ID" value="CAM18834.1"/>
    <property type="status" value="JOINED"/>
    <property type="molecule type" value="Genomic_DNA"/>
</dbReference>
<dbReference type="EMBL" id="AL607143">
    <property type="protein sequence ID" value="CAM18834.1"/>
    <property type="status" value="JOINED"/>
    <property type="molecule type" value="Genomic_DNA"/>
</dbReference>
<dbReference type="EMBL" id="AL611931">
    <property type="protein sequence ID" value="CAM18834.1"/>
    <property type="status" value="JOINED"/>
    <property type="molecule type" value="Genomic_DNA"/>
</dbReference>
<dbReference type="EMBL" id="AL732550">
    <property type="protein sequence ID" value="CAM18834.1"/>
    <property type="status" value="JOINED"/>
    <property type="molecule type" value="Genomic_DNA"/>
</dbReference>
<dbReference type="EMBL" id="AL606986">
    <property type="protein sequence ID" value="CAM18835.1"/>
    <property type="molecule type" value="Genomic_DNA"/>
</dbReference>
<dbReference type="EMBL" id="AL606967">
    <property type="protein sequence ID" value="CAM18835.1"/>
    <property type="status" value="JOINED"/>
    <property type="molecule type" value="Genomic_DNA"/>
</dbReference>
<dbReference type="EMBL" id="AL607143">
    <property type="protein sequence ID" value="CAM18835.1"/>
    <property type="status" value="JOINED"/>
    <property type="molecule type" value="Genomic_DNA"/>
</dbReference>
<dbReference type="EMBL" id="AL611931">
    <property type="protein sequence ID" value="CAM18835.1"/>
    <property type="status" value="JOINED"/>
    <property type="molecule type" value="Genomic_DNA"/>
</dbReference>
<dbReference type="EMBL" id="AL732550">
    <property type="protein sequence ID" value="CAM18835.1"/>
    <property type="status" value="JOINED"/>
    <property type="molecule type" value="Genomic_DNA"/>
</dbReference>
<dbReference type="EMBL" id="AL606967">
    <property type="protein sequence ID" value="CAM20269.1"/>
    <property type="molecule type" value="Genomic_DNA"/>
</dbReference>
<dbReference type="EMBL" id="AL606986">
    <property type="protein sequence ID" value="CAM20269.1"/>
    <property type="status" value="JOINED"/>
    <property type="molecule type" value="Genomic_DNA"/>
</dbReference>
<dbReference type="EMBL" id="AL607143">
    <property type="protein sequence ID" value="CAM20269.1"/>
    <property type="status" value="JOINED"/>
    <property type="molecule type" value="Genomic_DNA"/>
</dbReference>
<dbReference type="EMBL" id="AL611931">
    <property type="protein sequence ID" value="CAM20269.1"/>
    <property type="status" value="JOINED"/>
    <property type="molecule type" value="Genomic_DNA"/>
</dbReference>
<dbReference type="EMBL" id="AL732550">
    <property type="protein sequence ID" value="CAM20269.1"/>
    <property type="status" value="JOINED"/>
    <property type="molecule type" value="Genomic_DNA"/>
</dbReference>
<dbReference type="EMBL" id="AL606967">
    <property type="protein sequence ID" value="CAM20270.1"/>
    <property type="molecule type" value="Genomic_DNA"/>
</dbReference>
<dbReference type="EMBL" id="AL606986">
    <property type="protein sequence ID" value="CAM20270.1"/>
    <property type="status" value="JOINED"/>
    <property type="molecule type" value="Genomic_DNA"/>
</dbReference>
<dbReference type="EMBL" id="AL607143">
    <property type="protein sequence ID" value="CAM20270.1"/>
    <property type="status" value="JOINED"/>
    <property type="molecule type" value="Genomic_DNA"/>
</dbReference>
<dbReference type="EMBL" id="AL611931">
    <property type="protein sequence ID" value="CAM20270.1"/>
    <property type="status" value="JOINED"/>
    <property type="molecule type" value="Genomic_DNA"/>
</dbReference>
<dbReference type="EMBL" id="AL732550">
    <property type="protein sequence ID" value="CAM20270.1"/>
    <property type="status" value="JOINED"/>
    <property type="molecule type" value="Genomic_DNA"/>
</dbReference>
<dbReference type="EMBL" id="AL732550">
    <property type="protein sequence ID" value="CAM24365.1"/>
    <property type="molecule type" value="Genomic_DNA"/>
</dbReference>
<dbReference type="EMBL" id="AL606967">
    <property type="protein sequence ID" value="CAM24365.1"/>
    <property type="status" value="JOINED"/>
    <property type="molecule type" value="Genomic_DNA"/>
</dbReference>
<dbReference type="EMBL" id="AL606986">
    <property type="protein sequence ID" value="CAM24365.1"/>
    <property type="status" value="JOINED"/>
    <property type="molecule type" value="Genomic_DNA"/>
</dbReference>
<dbReference type="EMBL" id="AL607143">
    <property type="protein sequence ID" value="CAM24365.1"/>
    <property type="status" value="JOINED"/>
    <property type="molecule type" value="Genomic_DNA"/>
</dbReference>
<dbReference type="EMBL" id="AL611931">
    <property type="protein sequence ID" value="CAM24365.1"/>
    <property type="status" value="JOINED"/>
    <property type="molecule type" value="Genomic_DNA"/>
</dbReference>
<dbReference type="EMBL" id="AL732550">
    <property type="protein sequence ID" value="CAM24366.1"/>
    <property type="molecule type" value="Genomic_DNA"/>
</dbReference>
<dbReference type="EMBL" id="AL606967">
    <property type="protein sequence ID" value="CAM24366.1"/>
    <property type="status" value="JOINED"/>
    <property type="molecule type" value="Genomic_DNA"/>
</dbReference>
<dbReference type="EMBL" id="AL606986">
    <property type="protein sequence ID" value="CAM24366.1"/>
    <property type="status" value="JOINED"/>
    <property type="molecule type" value="Genomic_DNA"/>
</dbReference>
<dbReference type="EMBL" id="AL607143">
    <property type="protein sequence ID" value="CAM24366.1"/>
    <property type="status" value="JOINED"/>
    <property type="molecule type" value="Genomic_DNA"/>
</dbReference>
<dbReference type="EMBL" id="AL611931">
    <property type="protein sequence ID" value="CAM24366.1"/>
    <property type="status" value="JOINED"/>
    <property type="molecule type" value="Genomic_DNA"/>
</dbReference>
<dbReference type="EMBL" id="AL607143">
    <property type="protein sequence ID" value="CAM24783.1"/>
    <property type="molecule type" value="Genomic_DNA"/>
</dbReference>
<dbReference type="EMBL" id="AL606967">
    <property type="protein sequence ID" value="CAM24783.1"/>
    <property type="status" value="JOINED"/>
    <property type="molecule type" value="Genomic_DNA"/>
</dbReference>
<dbReference type="EMBL" id="AL606986">
    <property type="protein sequence ID" value="CAM24783.1"/>
    <property type="status" value="JOINED"/>
    <property type="molecule type" value="Genomic_DNA"/>
</dbReference>
<dbReference type="EMBL" id="AL611931">
    <property type="protein sequence ID" value="CAM24783.1"/>
    <property type="status" value="JOINED"/>
    <property type="molecule type" value="Genomic_DNA"/>
</dbReference>
<dbReference type="EMBL" id="AL732550">
    <property type="protein sequence ID" value="CAM24783.1"/>
    <property type="status" value="JOINED"/>
    <property type="molecule type" value="Genomic_DNA"/>
</dbReference>
<dbReference type="EMBL" id="AL607143">
    <property type="protein sequence ID" value="CAM24784.1"/>
    <property type="molecule type" value="Genomic_DNA"/>
</dbReference>
<dbReference type="EMBL" id="AL606967">
    <property type="protein sequence ID" value="CAM24784.1"/>
    <property type="status" value="JOINED"/>
    <property type="molecule type" value="Genomic_DNA"/>
</dbReference>
<dbReference type="EMBL" id="AL606986">
    <property type="protein sequence ID" value="CAM24784.1"/>
    <property type="status" value="JOINED"/>
    <property type="molecule type" value="Genomic_DNA"/>
</dbReference>
<dbReference type="EMBL" id="AL611931">
    <property type="protein sequence ID" value="CAM24784.1"/>
    <property type="status" value="JOINED"/>
    <property type="molecule type" value="Genomic_DNA"/>
</dbReference>
<dbReference type="EMBL" id="AL732550">
    <property type="protein sequence ID" value="CAM24784.1"/>
    <property type="status" value="JOINED"/>
    <property type="molecule type" value="Genomic_DNA"/>
</dbReference>
<dbReference type="EMBL" id="AL607143">
    <property type="protein sequence ID" value="CAM24788.2"/>
    <property type="status" value="ALT_SEQ"/>
    <property type="molecule type" value="Genomic_DNA"/>
</dbReference>
<dbReference type="EMBL" id="AL607143">
    <property type="protein sequence ID" value="CAM24789.1"/>
    <property type="molecule type" value="Genomic_DNA"/>
</dbReference>
<dbReference type="EMBL" id="AL607143">
    <property type="protein sequence ID" value="CAM24790.1"/>
    <property type="molecule type" value="Genomic_DNA"/>
</dbReference>
<dbReference type="EMBL" id="AL611931">
    <property type="protein sequence ID" value="CAM25054.1"/>
    <property type="molecule type" value="Genomic_DNA"/>
</dbReference>
<dbReference type="EMBL" id="AL606967">
    <property type="protein sequence ID" value="CAM25054.1"/>
    <property type="status" value="JOINED"/>
    <property type="molecule type" value="Genomic_DNA"/>
</dbReference>
<dbReference type="EMBL" id="AL606986">
    <property type="protein sequence ID" value="CAM25054.1"/>
    <property type="status" value="JOINED"/>
    <property type="molecule type" value="Genomic_DNA"/>
</dbReference>
<dbReference type="EMBL" id="AL607143">
    <property type="protein sequence ID" value="CAM25054.1"/>
    <property type="status" value="JOINED"/>
    <property type="molecule type" value="Genomic_DNA"/>
</dbReference>
<dbReference type="EMBL" id="AL732550">
    <property type="protein sequence ID" value="CAM25054.1"/>
    <property type="status" value="JOINED"/>
    <property type="molecule type" value="Genomic_DNA"/>
</dbReference>
<dbReference type="EMBL" id="AL611931">
    <property type="protein sequence ID" value="CAM25055.1"/>
    <property type="molecule type" value="Genomic_DNA"/>
</dbReference>
<dbReference type="EMBL" id="AL606967">
    <property type="protein sequence ID" value="CAM25055.1"/>
    <property type="status" value="JOINED"/>
    <property type="molecule type" value="Genomic_DNA"/>
</dbReference>
<dbReference type="EMBL" id="AL606986">
    <property type="protein sequence ID" value="CAM25055.1"/>
    <property type="status" value="JOINED"/>
    <property type="molecule type" value="Genomic_DNA"/>
</dbReference>
<dbReference type="EMBL" id="AL607143">
    <property type="protein sequence ID" value="CAM25055.1"/>
    <property type="status" value="JOINED"/>
    <property type="molecule type" value="Genomic_DNA"/>
</dbReference>
<dbReference type="EMBL" id="AL732550">
    <property type="protein sequence ID" value="CAM25055.1"/>
    <property type="status" value="JOINED"/>
    <property type="molecule type" value="Genomic_DNA"/>
</dbReference>
<dbReference type="EMBL" id="CU442759">
    <property type="protein sequence ID" value="CAQ51627.1"/>
    <property type="molecule type" value="Genomic_DNA"/>
</dbReference>
<dbReference type="EMBL" id="CU207342">
    <property type="protein sequence ID" value="CAQ51627.1"/>
    <property type="status" value="JOINED"/>
    <property type="molecule type" value="Genomic_DNA"/>
</dbReference>
<dbReference type="EMBL" id="CU407306">
    <property type="protein sequence ID" value="CAQ51627.1"/>
    <property type="status" value="JOINED"/>
    <property type="molecule type" value="Genomic_DNA"/>
</dbReference>
<dbReference type="EMBL" id="CU442759">
    <property type="protein sequence ID" value="CAQ51628.1"/>
    <property type="molecule type" value="Genomic_DNA"/>
</dbReference>
<dbReference type="EMBL" id="CU207342">
    <property type="protein sequence ID" value="CAQ51628.1"/>
    <property type="status" value="JOINED"/>
    <property type="molecule type" value="Genomic_DNA"/>
</dbReference>
<dbReference type="EMBL" id="CU407306">
    <property type="protein sequence ID" value="CAQ51628.1"/>
    <property type="status" value="JOINED"/>
    <property type="molecule type" value="Genomic_DNA"/>
</dbReference>
<dbReference type="EMBL" id="CU407306">
    <property type="protein sequence ID" value="CAQ51883.1"/>
    <property type="molecule type" value="Genomic_DNA"/>
</dbReference>
<dbReference type="EMBL" id="CU207342">
    <property type="protein sequence ID" value="CAQ51883.1"/>
    <property type="status" value="JOINED"/>
    <property type="molecule type" value="Genomic_DNA"/>
</dbReference>
<dbReference type="EMBL" id="CU442759">
    <property type="protein sequence ID" value="CAQ51883.1"/>
    <property type="status" value="JOINED"/>
    <property type="molecule type" value="Genomic_DNA"/>
</dbReference>
<dbReference type="EMBL" id="CU407306">
    <property type="protein sequence ID" value="CAQ51884.1"/>
    <property type="molecule type" value="Genomic_DNA"/>
</dbReference>
<dbReference type="EMBL" id="CU207342">
    <property type="protein sequence ID" value="CAQ51884.1"/>
    <property type="status" value="JOINED"/>
    <property type="molecule type" value="Genomic_DNA"/>
</dbReference>
<dbReference type="EMBL" id="CU442759">
    <property type="protein sequence ID" value="CAQ51884.1"/>
    <property type="status" value="JOINED"/>
    <property type="molecule type" value="Genomic_DNA"/>
</dbReference>
<dbReference type="EMBL" id="AK122383">
    <property type="protein sequence ID" value="BAC65665.1"/>
    <property type="molecule type" value="mRNA"/>
</dbReference>
<dbReference type="CCDS" id="CCDS38981.1">
    <molecule id="A2A891-1"/>
</dbReference>
<dbReference type="RefSeq" id="NP_001075026.1">
    <molecule id="A2A891-1"/>
    <property type="nucleotide sequence ID" value="NM_001081557.3"/>
</dbReference>
<dbReference type="RefSeq" id="XP_030108899.1">
    <molecule id="A2A891-3"/>
    <property type="nucleotide sequence ID" value="XM_030253039.2"/>
</dbReference>
<dbReference type="RefSeq" id="XP_030108902.1">
    <molecule id="A2A891-3"/>
    <property type="nucleotide sequence ID" value="XM_030253042.2"/>
</dbReference>
<dbReference type="RefSeq" id="XP_030108903.1">
    <molecule id="A2A891-3"/>
    <property type="nucleotide sequence ID" value="XM_030253043.2"/>
</dbReference>
<dbReference type="RefSeq" id="XP_030108904.1">
    <molecule id="A2A891-3"/>
    <property type="nucleotide sequence ID" value="XM_030253044.1"/>
</dbReference>
<dbReference type="RefSeq" id="XP_030108905.1">
    <molecule id="A2A891-4"/>
    <property type="nucleotide sequence ID" value="XM_030253045.2"/>
</dbReference>
<dbReference type="RefSeq" id="XP_030108906.1">
    <molecule id="A2A891-4"/>
    <property type="nucleotide sequence ID" value="XM_030253046.2"/>
</dbReference>
<dbReference type="SMR" id="A2A891"/>
<dbReference type="FunCoup" id="A2A891">
    <property type="interactions" value="3381"/>
</dbReference>
<dbReference type="IntAct" id="A2A891">
    <property type="interactions" value="1"/>
</dbReference>
<dbReference type="STRING" id="10090.ENSMUSP00000054804"/>
<dbReference type="GlyGen" id="A2A891">
    <property type="glycosylation" value="1 site"/>
</dbReference>
<dbReference type="iPTMnet" id="A2A891"/>
<dbReference type="PhosphoSitePlus" id="A2A891"/>
<dbReference type="SwissPalm" id="A2A891"/>
<dbReference type="PaxDb" id="10090-ENSMUSP00000054804"/>
<dbReference type="ProteomicsDB" id="283639">
    <molecule id="A2A891-1"/>
</dbReference>
<dbReference type="ProteomicsDB" id="283640">
    <molecule id="A2A891-2"/>
</dbReference>
<dbReference type="ProteomicsDB" id="283641">
    <molecule id="A2A891-3"/>
</dbReference>
<dbReference type="ProteomicsDB" id="283642">
    <molecule id="A2A891-4"/>
</dbReference>
<dbReference type="ProteomicsDB" id="283643">
    <molecule id="A2A891-5"/>
</dbReference>
<dbReference type="Antibodypedia" id="49059">
    <property type="antibodies" value="60 antibodies from 18 providers"/>
</dbReference>
<dbReference type="Ensembl" id="ENSMUST00000049790.14">
    <molecule id="A2A891-1"/>
    <property type="protein sequence ID" value="ENSMUSP00000054804.8"/>
    <property type="gene ID" value="ENSMUSG00000014592.23"/>
</dbReference>
<dbReference type="Ensembl" id="ENSMUST00000097774.9">
    <molecule id="A2A891-2"/>
    <property type="protein sequence ID" value="ENSMUSP00000095381.3"/>
    <property type="gene ID" value="ENSMUSG00000014592.23"/>
</dbReference>
<dbReference type="Ensembl" id="ENSMUST00000105668.8">
    <molecule id="A2A891-3"/>
    <property type="protein sequence ID" value="ENSMUSP00000101293.2"/>
    <property type="gene ID" value="ENSMUSG00000014592.23"/>
</dbReference>
<dbReference type="Ensembl" id="ENSMUST00000105670.8">
    <molecule id="A2A891-4"/>
    <property type="protein sequence ID" value="ENSMUSP00000101295.2"/>
    <property type="gene ID" value="ENSMUSG00000014592.23"/>
</dbReference>
<dbReference type="GeneID" id="100072"/>
<dbReference type="KEGG" id="mmu:100072"/>
<dbReference type="UCSC" id="uc008vyk.2">
    <molecule id="A2A891-4"/>
    <property type="organism name" value="mouse"/>
</dbReference>
<dbReference type="UCSC" id="uc008vym.2">
    <molecule id="A2A891-3"/>
    <property type="organism name" value="mouse"/>
</dbReference>
<dbReference type="UCSC" id="uc008vyn.2">
    <molecule id="A2A891-1"/>
    <property type="organism name" value="mouse"/>
</dbReference>
<dbReference type="AGR" id="MGI:2140230"/>
<dbReference type="CTD" id="23261"/>
<dbReference type="MGI" id="MGI:2140230">
    <property type="gene designation" value="Camta1"/>
</dbReference>
<dbReference type="VEuPathDB" id="HostDB:ENSMUSG00000014592"/>
<dbReference type="eggNOG" id="KOG0520">
    <property type="taxonomic scope" value="Eukaryota"/>
</dbReference>
<dbReference type="GeneTree" id="ENSGT00940000155203"/>
<dbReference type="HOGENOM" id="CLU_003170_1_0_1"/>
<dbReference type="InParanoid" id="A2A891"/>
<dbReference type="OMA" id="GCANYSA"/>
<dbReference type="OrthoDB" id="407555at2759"/>
<dbReference type="PhylomeDB" id="A2A891"/>
<dbReference type="TreeFam" id="TF323452"/>
<dbReference type="BioGRID-ORCS" id="100072">
    <property type="hits" value="3 hits in 81 CRISPR screens"/>
</dbReference>
<dbReference type="ChiTaRS" id="Camta1">
    <property type="organism name" value="mouse"/>
</dbReference>
<dbReference type="PRO" id="PR:A2A891"/>
<dbReference type="Proteomes" id="UP000000589">
    <property type="component" value="Chromosome 4"/>
</dbReference>
<dbReference type="RNAct" id="A2A891">
    <property type="molecule type" value="protein"/>
</dbReference>
<dbReference type="Bgee" id="ENSMUSG00000014592">
    <property type="expression patterns" value="Expressed in ventromedial nucleus of hypothalamus and 229 other cell types or tissues"/>
</dbReference>
<dbReference type="ExpressionAtlas" id="A2A891">
    <property type="expression patterns" value="baseline and differential"/>
</dbReference>
<dbReference type="GO" id="GO:0005737">
    <property type="term" value="C:cytoplasm"/>
    <property type="evidence" value="ECO:0007669"/>
    <property type="project" value="UniProtKB-SubCell"/>
</dbReference>
<dbReference type="GO" id="GO:0005634">
    <property type="term" value="C:nucleus"/>
    <property type="evidence" value="ECO:0007669"/>
    <property type="project" value="UniProtKB-SubCell"/>
</dbReference>
<dbReference type="GO" id="GO:0043565">
    <property type="term" value="F:sequence-specific DNA binding"/>
    <property type="evidence" value="ECO:0000314"/>
    <property type="project" value="MGI"/>
</dbReference>
<dbReference type="GO" id="GO:0050885">
    <property type="term" value="P:neuromuscular process controlling balance"/>
    <property type="evidence" value="ECO:0000315"/>
    <property type="project" value="MGI"/>
</dbReference>
<dbReference type="GO" id="GO:0070886">
    <property type="term" value="P:positive regulation of calcineurin-NFAT signaling cascade"/>
    <property type="evidence" value="ECO:0007669"/>
    <property type="project" value="Ensembl"/>
</dbReference>
<dbReference type="GO" id="GO:0045944">
    <property type="term" value="P:positive regulation of transcription by RNA polymerase II"/>
    <property type="evidence" value="ECO:0000314"/>
    <property type="project" value="ARUK-UCL"/>
</dbReference>
<dbReference type="CDD" id="cd23767">
    <property type="entry name" value="IQCD"/>
    <property type="match status" value="1"/>
</dbReference>
<dbReference type="FunFam" id="1.20.5.190:FF:000131">
    <property type="match status" value="1"/>
</dbReference>
<dbReference type="FunFam" id="1.25.40.20:FF:000165">
    <property type="entry name" value="calmodulin-binding transcription activator 1 isoform X2"/>
    <property type="match status" value="1"/>
</dbReference>
<dbReference type="FunFam" id="2.60.40.10:FF:000089">
    <property type="entry name" value="calmodulin-binding transcription activator 2 isoform X1"/>
    <property type="match status" value="1"/>
</dbReference>
<dbReference type="Gene3D" id="1.20.5.190">
    <property type="match status" value="1"/>
</dbReference>
<dbReference type="Gene3D" id="1.25.40.20">
    <property type="entry name" value="Ankyrin repeat-containing domain"/>
    <property type="match status" value="1"/>
</dbReference>
<dbReference type="Gene3D" id="2.60.40.10">
    <property type="entry name" value="Immunoglobulins"/>
    <property type="match status" value="1"/>
</dbReference>
<dbReference type="InterPro" id="IPR002110">
    <property type="entry name" value="Ankyrin_rpt"/>
</dbReference>
<dbReference type="InterPro" id="IPR036770">
    <property type="entry name" value="Ankyrin_rpt-contain_sf"/>
</dbReference>
<dbReference type="InterPro" id="IPR005559">
    <property type="entry name" value="CG-1_dom"/>
</dbReference>
<dbReference type="InterPro" id="IPR013783">
    <property type="entry name" value="Ig-like_fold"/>
</dbReference>
<dbReference type="InterPro" id="IPR014756">
    <property type="entry name" value="Ig_E-set"/>
</dbReference>
<dbReference type="InterPro" id="IPR002909">
    <property type="entry name" value="IPT_dom"/>
</dbReference>
<dbReference type="PANTHER" id="PTHR23335:SF11">
    <property type="entry name" value="CALMODULIN-BINDING TRANSCRIPTION ACTIVATOR 1"/>
    <property type="match status" value="1"/>
</dbReference>
<dbReference type="PANTHER" id="PTHR23335">
    <property type="entry name" value="CALMODULIN-BINDING TRANSCRIPTION ACTIVATOR CAMTA"/>
    <property type="match status" value="1"/>
</dbReference>
<dbReference type="Pfam" id="PF12796">
    <property type="entry name" value="Ank_2"/>
    <property type="match status" value="1"/>
</dbReference>
<dbReference type="Pfam" id="PF03859">
    <property type="entry name" value="CG-1"/>
    <property type="match status" value="1"/>
</dbReference>
<dbReference type="Pfam" id="PF01833">
    <property type="entry name" value="TIG"/>
    <property type="match status" value="1"/>
</dbReference>
<dbReference type="SMART" id="SM01076">
    <property type="entry name" value="CG-1"/>
    <property type="match status" value="1"/>
</dbReference>
<dbReference type="SUPFAM" id="SSF48403">
    <property type="entry name" value="Ankyrin repeat"/>
    <property type="match status" value="1"/>
</dbReference>
<dbReference type="SUPFAM" id="SSF81296">
    <property type="entry name" value="E set domains"/>
    <property type="match status" value="1"/>
</dbReference>
<dbReference type="PROSITE" id="PS50297">
    <property type="entry name" value="ANK_REP_REGION"/>
    <property type="match status" value="1"/>
</dbReference>
<dbReference type="PROSITE" id="PS50088">
    <property type="entry name" value="ANK_REPEAT"/>
    <property type="match status" value="1"/>
</dbReference>
<dbReference type="PROSITE" id="PS51437">
    <property type="entry name" value="CG_1"/>
    <property type="match status" value="1"/>
</dbReference>
<dbReference type="PROSITE" id="PS50096">
    <property type="entry name" value="IQ"/>
    <property type="match status" value="1"/>
</dbReference>
<proteinExistence type="evidence at transcript level"/>
<protein>
    <recommendedName>
        <fullName evidence="10">Calmodulin-binding transcription activator 1</fullName>
    </recommendedName>
</protein>
<sequence length="1682" mass="184319">MWRAEGKWLPKTSRKSVSQSVFCGTSTYCVLNTVPPIEDDHGNSNSSHVKIFLPKKLLECLPKCSSLPKERHRWNTNEEIAAYLITFEKHEEWLTTSPKTRPQNGSMILYNRKKVKYRKDGYCWKKRKDGKTTREDHMKLKVQGVECLYGCYVHSSIIPTFHRRCYWLLQNPDIVLVHYLNVPAIEDCGKPCGPILCSINTDKKEWAKWTKEELIGQLKPMFHGIKWTCSNGNSSSGFSVEQLVQQILDSHQTKPQPRTHNCLCTGSLGAGSSVHHKCNSAKHRIISPKVEPRAGGYGGHSEVQHNDVSEGKHEPSHGRSTSREKRNGKVAKPALLHQNSTEVSSTNQVEVPDTTQSSPVSISSGLNSDPDMVDSPVVTGVSSMAVASVMGGLSQSATVFMSEVTNEAVYTMSPTAGPNHHLLSPDASQGLVLAVSSDGHKFAFPTTGSSDSLSMLPANVSEELVLSTTLDGGRKIPETAMNFDPDCFLNNPKQGQTYGGGGLKAEMVSTNIRHSPPAERSFGFTSVLTKEIKTEDTSFEQQMAKEAAYSSSAAAAASSSLTLTAAGSSLLPSGGGLSPSTTLEQMDFSAIDSNKDYASSFSQTGHSPHIHQTPSPSFFLQDASKPLPLEQNTHSSLSESGAAFVMPTVKTEASSQTSSCSGHVETRIESTSSLHLMQFQANFQAMAAEGEVTMETSQAAEGNEVLLKSGELQACGSEHYLQPETNGVIRSAGGVPLLPSNVVQGLYPVAQPSLGNSSNMELSLDHFDISFSNQFSDLINDFISVEGGSGTIYGHQLVSGDSAALSQSEDGARAPFTQAEMCIPCCSPQQGSLQLSSAEGGPSTMAYMHVAEVVSAASAQGALGMLQQSGRVFMVTDYSPEWSYPEGGVKVLITGPWQEASNNYSCLFDQISVPASLIQPGVLRCYCPAHDTGLVTLQVAFNNQIISNSVVFEYKARALPTLPSSQHDWLSLDDNQFRMSILERLEQMERRMAEMTGSQQHKQASGGGGSGSGSGSGAGGGQAQCASGAGTLGSCFESRVVVVCEKMMSRACWAKSKHLIHSKTFRGMTLLHLAAAQGYATLIQTLIKWRTKHADSIDLELEVDPLNVDHFSCTPLMWACALGHLEAAVVLYKWDRRAISIPDSLGRLPLGIARSRGHVKLAECLEHLQRDEQAQLGQASRIHCAPSEEPTTDSWMAQWQREAMSPPEIPKGVTVIASTNPELRRPRSEPSNYYSTEGHKDYPAPKKHKLNPESFQARQEKLLCTALSLEQPNIRKQSPRSKQPSPETISPSEGVREYSREAAPPTPETAASQASASQPVVKWSAKDLYIGVSTVQVTGNPKGTSVVKDAAPSQVRPREPMSVLMLANREVVNTEMGAYRDRTEHEDCPQPMDDIQVNMMTLAEHIIEATPDRIKQENFVPMESSALERTDPATISSTMSWLASYLADADRLPSAAHIRSAYTEPLTPSSNASLSPAGSPVSEVAFEKPSLPSAADWSEFLSASTSEKVESELAQLTLSDHEQRELYEAARLVQTAFRKYKGRPLREQQEVAAAVIQRCYRKYKQLTWIALKYALYKKMTQAAILIQSKFRSYYEQKRFQQSRRAAVLIQNFYRSYKKCGRRRPARRTAVIVQQKLRSSLLTKKQDQAARKIMRFLRRCRHSPLVDHRLYKRSERIEKGQGT</sequence>
<evidence type="ECO:0000250" key="1"/>
<evidence type="ECO:0000250" key="2">
    <source>
        <dbReference type="UniProtKB" id="Q9Y6Y1"/>
    </source>
</evidence>
<evidence type="ECO:0000255" key="3"/>
<evidence type="ECO:0000255" key="4">
    <source>
        <dbReference type="PROSITE-ProRule" id="PRU00116"/>
    </source>
</evidence>
<evidence type="ECO:0000255" key="5">
    <source>
        <dbReference type="PROSITE-ProRule" id="PRU00767"/>
    </source>
</evidence>
<evidence type="ECO:0000256" key="6">
    <source>
        <dbReference type="SAM" id="MobiDB-lite"/>
    </source>
</evidence>
<evidence type="ECO:0000269" key="7">
    <source>
    </source>
</evidence>
<evidence type="ECO:0000305" key="8"/>
<evidence type="ECO:0000312" key="9">
    <source>
        <dbReference type="EMBL" id="BAC65665.1"/>
    </source>
</evidence>
<evidence type="ECO:0000312" key="10">
    <source>
        <dbReference type="EMBL" id="CAM24783.1"/>
    </source>
</evidence>
<evidence type="ECO:0000312" key="11">
    <source>
        <dbReference type="MGI" id="MGI:2140230"/>
    </source>
</evidence>